<keyword id="KW-1185">Reference proteome</keyword>
<gene>
    <name type="primary">ydhW</name>
    <name type="ordered locus">b1672</name>
    <name type="ordered locus">JW1662</name>
</gene>
<evidence type="ECO:0000269" key="1">
    <source>
    </source>
</evidence>
<proteinExistence type="evidence at transcript level"/>
<sequence length="215" mass="24421">MGKMNHQDELPLAKVSEVDEAKRQWLQGMRHPVDTVTEPEPAEILAEFIRQHSAAGQLVARAVFLSPPYLVAEEELSVLLESIKQNGDYADIACLTGSKDDYYYSTQAMSENYAAMSLQVVEQDICRAIAHAVRFECQTYPRPYKVAMLMQAPYYFQEAQIEAAIAAMDVAPEYADIRQVESSTAVLYLFSERFMTYGKAYGLCEWFEVEQFQNP</sequence>
<comment type="induction">
    <text evidence="1">Up-regulated by the oxygen-responsive transcription factor FNR under anaerobic conditions. Repressed in the presence of nitrate or nitrite via the two-component systems NarXL and NarPQ, respectively.</text>
</comment>
<dbReference type="EMBL" id="U68703">
    <property type="protein sequence ID" value="AAB47948.1"/>
    <property type="molecule type" value="Genomic_DNA"/>
</dbReference>
<dbReference type="EMBL" id="U00096">
    <property type="protein sequence ID" value="AAC74742.1"/>
    <property type="molecule type" value="Genomic_DNA"/>
</dbReference>
<dbReference type="EMBL" id="AP009048">
    <property type="protein sequence ID" value="BAE76497.1"/>
    <property type="molecule type" value="Genomic_DNA"/>
</dbReference>
<dbReference type="PIR" id="H64924">
    <property type="entry name" value="H64924"/>
</dbReference>
<dbReference type="RefSeq" id="NP_416187.1">
    <property type="nucleotide sequence ID" value="NC_000913.3"/>
</dbReference>
<dbReference type="BioGRID" id="4261765">
    <property type="interactions" value="34"/>
</dbReference>
<dbReference type="FunCoup" id="P77564">
    <property type="interactions" value="41"/>
</dbReference>
<dbReference type="IntAct" id="P77564">
    <property type="interactions" value="11"/>
</dbReference>
<dbReference type="STRING" id="511145.b1672"/>
<dbReference type="PaxDb" id="511145-b1672"/>
<dbReference type="EnsemblBacteria" id="AAC74742">
    <property type="protein sequence ID" value="AAC74742"/>
    <property type="gene ID" value="b1672"/>
</dbReference>
<dbReference type="GeneID" id="947180"/>
<dbReference type="KEGG" id="ecj:JW1662"/>
<dbReference type="KEGG" id="eco:b1672"/>
<dbReference type="PATRIC" id="fig|511145.12.peg.1743"/>
<dbReference type="EchoBASE" id="EB3715"/>
<dbReference type="eggNOG" id="ENOG502ZHI0">
    <property type="taxonomic scope" value="Bacteria"/>
</dbReference>
<dbReference type="HOGENOM" id="CLU_111062_0_0_6"/>
<dbReference type="InParanoid" id="P77564"/>
<dbReference type="OMA" id="GLCEWLE"/>
<dbReference type="OrthoDB" id="6433774at2"/>
<dbReference type="BioCyc" id="EcoCyc:G6900-MONOMER"/>
<dbReference type="PRO" id="PR:P77564"/>
<dbReference type="Proteomes" id="UP000000625">
    <property type="component" value="Chromosome"/>
</dbReference>
<dbReference type="NCBIfam" id="NF007411">
    <property type="entry name" value="PRK09947.1"/>
    <property type="match status" value="1"/>
</dbReference>
<feature type="chain" id="PRO_0000168981" description="Uncharacterized protein YdhW">
    <location>
        <begin position="1"/>
        <end position="215"/>
    </location>
</feature>
<reference key="1">
    <citation type="journal article" date="1997" name="J. Bacteriol.">
        <title>Analysis of the boundaries of Salmonella pathogenicity island 2 and the corresponding chromosomal region of Escherichia coli K-12.</title>
        <authorList>
            <person name="Hensel M."/>
            <person name="Shea J.E."/>
            <person name="Baeumler A.J."/>
            <person name="Gleeson C."/>
            <person name="Blattner F.R."/>
            <person name="Holden D.W."/>
        </authorList>
    </citation>
    <scope>NUCLEOTIDE SEQUENCE [GENOMIC DNA]</scope>
    <source>
        <strain>K12 / MG1655 / ATCC 47076</strain>
    </source>
</reference>
<reference key="2">
    <citation type="journal article" date="1997" name="Science">
        <title>The complete genome sequence of Escherichia coli K-12.</title>
        <authorList>
            <person name="Blattner F.R."/>
            <person name="Plunkett G. III"/>
            <person name="Bloch C.A."/>
            <person name="Perna N.T."/>
            <person name="Burland V."/>
            <person name="Riley M."/>
            <person name="Collado-Vides J."/>
            <person name="Glasner J.D."/>
            <person name="Rode C.K."/>
            <person name="Mayhew G.F."/>
            <person name="Gregor J."/>
            <person name="Davis N.W."/>
            <person name="Kirkpatrick H.A."/>
            <person name="Goeden M.A."/>
            <person name="Rose D.J."/>
            <person name="Mau B."/>
            <person name="Shao Y."/>
        </authorList>
    </citation>
    <scope>NUCLEOTIDE SEQUENCE [LARGE SCALE GENOMIC DNA]</scope>
    <source>
        <strain>K12 / MG1655 / ATCC 47076</strain>
    </source>
</reference>
<reference key="3">
    <citation type="journal article" date="2006" name="Mol. Syst. Biol.">
        <title>Highly accurate genome sequences of Escherichia coli K-12 strains MG1655 and W3110.</title>
        <authorList>
            <person name="Hayashi K."/>
            <person name="Morooka N."/>
            <person name="Yamamoto Y."/>
            <person name="Fujita K."/>
            <person name="Isono K."/>
            <person name="Choi S."/>
            <person name="Ohtsubo E."/>
            <person name="Baba T."/>
            <person name="Wanner B.L."/>
            <person name="Mori H."/>
            <person name="Horiuchi T."/>
        </authorList>
    </citation>
    <scope>NUCLEOTIDE SEQUENCE [LARGE SCALE GENOMIC DNA]</scope>
    <source>
        <strain>K12 / W3110 / ATCC 27325 / DSM 5911</strain>
    </source>
</reference>
<reference key="4">
    <citation type="journal article" date="2008" name="Microbiology">
        <title>Characterization of the Escherichia coli K-12 ydhYVWXUT operon: regulation by FNR, NarL and NarP.</title>
        <authorList>
            <person name="Partridge J.D."/>
            <person name="Browning D.F."/>
            <person name="Xu M."/>
            <person name="Newnham L.J."/>
            <person name="Scott C."/>
            <person name="Roberts R.E."/>
            <person name="Poole R.K."/>
            <person name="Green J."/>
        </authorList>
    </citation>
    <scope>INDUCTION</scope>
    <source>
        <strain>K12</strain>
    </source>
</reference>
<name>YDHW_ECOLI</name>
<accession>P77564</accession>
<accession>Q2MB59</accession>
<protein>
    <recommendedName>
        <fullName>Uncharacterized protein YdhW</fullName>
    </recommendedName>
</protein>
<organism>
    <name type="scientific">Escherichia coli (strain K12)</name>
    <dbReference type="NCBI Taxonomy" id="83333"/>
    <lineage>
        <taxon>Bacteria</taxon>
        <taxon>Pseudomonadati</taxon>
        <taxon>Pseudomonadota</taxon>
        <taxon>Gammaproteobacteria</taxon>
        <taxon>Enterobacterales</taxon>
        <taxon>Enterobacteriaceae</taxon>
        <taxon>Escherichia</taxon>
    </lineage>
</organism>